<gene>
    <name type="ORF">SPBC651.12c</name>
</gene>
<organism>
    <name type="scientific">Schizosaccharomyces pombe (strain 972 / ATCC 24843)</name>
    <name type="common">Fission yeast</name>
    <dbReference type="NCBI Taxonomy" id="284812"/>
    <lineage>
        <taxon>Eukaryota</taxon>
        <taxon>Fungi</taxon>
        <taxon>Dikarya</taxon>
        <taxon>Ascomycota</taxon>
        <taxon>Taphrinomycotina</taxon>
        <taxon>Schizosaccharomycetes</taxon>
        <taxon>Schizosaccharomycetales</taxon>
        <taxon>Schizosaccharomycetaceae</taxon>
        <taxon>Schizosaccharomyces</taxon>
    </lineage>
</organism>
<feature type="chain" id="PRO_0000303934" description="Uncharacterized protein C651.12c">
    <location>
        <begin position="1"/>
        <end position="273"/>
    </location>
</feature>
<feature type="region of interest" description="Disordered" evidence="1">
    <location>
        <begin position="1"/>
        <end position="32"/>
    </location>
</feature>
<feature type="region of interest" description="Disordered" evidence="1">
    <location>
        <begin position="50"/>
        <end position="124"/>
    </location>
</feature>
<feature type="compositionally biased region" description="Basic residues" evidence="1">
    <location>
        <begin position="1"/>
        <end position="10"/>
    </location>
</feature>
<feature type="compositionally biased region" description="Polar residues" evidence="1">
    <location>
        <begin position="12"/>
        <end position="24"/>
    </location>
</feature>
<feature type="compositionally biased region" description="Polar residues" evidence="1">
    <location>
        <begin position="55"/>
        <end position="64"/>
    </location>
</feature>
<feature type="compositionally biased region" description="Polar residues" evidence="1">
    <location>
        <begin position="92"/>
        <end position="124"/>
    </location>
</feature>
<feature type="modified residue" description="Phosphoserine" evidence="3">
    <location>
        <position position="123"/>
    </location>
</feature>
<reference key="1">
    <citation type="journal article" date="2002" name="Nature">
        <title>The genome sequence of Schizosaccharomyces pombe.</title>
        <authorList>
            <person name="Wood V."/>
            <person name="Gwilliam R."/>
            <person name="Rajandream M.A."/>
            <person name="Lyne M.H."/>
            <person name="Lyne R."/>
            <person name="Stewart A."/>
            <person name="Sgouros J.G."/>
            <person name="Peat N."/>
            <person name="Hayles J."/>
            <person name="Baker S.G."/>
            <person name="Basham D."/>
            <person name="Bowman S."/>
            <person name="Brooks K."/>
            <person name="Brown D."/>
            <person name="Brown S."/>
            <person name="Chillingworth T."/>
            <person name="Churcher C.M."/>
            <person name="Collins M."/>
            <person name="Connor R."/>
            <person name="Cronin A."/>
            <person name="Davis P."/>
            <person name="Feltwell T."/>
            <person name="Fraser A."/>
            <person name="Gentles S."/>
            <person name="Goble A."/>
            <person name="Hamlin N."/>
            <person name="Harris D.E."/>
            <person name="Hidalgo J."/>
            <person name="Hodgson G."/>
            <person name="Holroyd S."/>
            <person name="Hornsby T."/>
            <person name="Howarth S."/>
            <person name="Huckle E.J."/>
            <person name="Hunt S."/>
            <person name="Jagels K."/>
            <person name="James K.D."/>
            <person name="Jones L."/>
            <person name="Jones M."/>
            <person name="Leather S."/>
            <person name="McDonald S."/>
            <person name="McLean J."/>
            <person name="Mooney P."/>
            <person name="Moule S."/>
            <person name="Mungall K.L."/>
            <person name="Murphy L.D."/>
            <person name="Niblett D."/>
            <person name="Odell C."/>
            <person name="Oliver K."/>
            <person name="O'Neil S."/>
            <person name="Pearson D."/>
            <person name="Quail M.A."/>
            <person name="Rabbinowitsch E."/>
            <person name="Rutherford K.M."/>
            <person name="Rutter S."/>
            <person name="Saunders D."/>
            <person name="Seeger K."/>
            <person name="Sharp S."/>
            <person name="Skelton J."/>
            <person name="Simmonds M.N."/>
            <person name="Squares R."/>
            <person name="Squares S."/>
            <person name="Stevens K."/>
            <person name="Taylor K."/>
            <person name="Taylor R.G."/>
            <person name="Tivey A."/>
            <person name="Walsh S.V."/>
            <person name="Warren T."/>
            <person name="Whitehead S."/>
            <person name="Woodward J.R."/>
            <person name="Volckaert G."/>
            <person name="Aert R."/>
            <person name="Robben J."/>
            <person name="Grymonprez B."/>
            <person name="Weltjens I."/>
            <person name="Vanstreels E."/>
            <person name="Rieger M."/>
            <person name="Schaefer M."/>
            <person name="Mueller-Auer S."/>
            <person name="Gabel C."/>
            <person name="Fuchs M."/>
            <person name="Duesterhoeft A."/>
            <person name="Fritzc C."/>
            <person name="Holzer E."/>
            <person name="Moestl D."/>
            <person name="Hilbert H."/>
            <person name="Borzym K."/>
            <person name="Langer I."/>
            <person name="Beck A."/>
            <person name="Lehrach H."/>
            <person name="Reinhardt R."/>
            <person name="Pohl T.M."/>
            <person name="Eger P."/>
            <person name="Zimmermann W."/>
            <person name="Wedler H."/>
            <person name="Wambutt R."/>
            <person name="Purnelle B."/>
            <person name="Goffeau A."/>
            <person name="Cadieu E."/>
            <person name="Dreano S."/>
            <person name="Gloux S."/>
            <person name="Lelaure V."/>
            <person name="Mottier S."/>
            <person name="Galibert F."/>
            <person name="Aves S.J."/>
            <person name="Xiang Z."/>
            <person name="Hunt C."/>
            <person name="Moore K."/>
            <person name="Hurst S.M."/>
            <person name="Lucas M."/>
            <person name="Rochet M."/>
            <person name="Gaillardin C."/>
            <person name="Tallada V.A."/>
            <person name="Garzon A."/>
            <person name="Thode G."/>
            <person name="Daga R.R."/>
            <person name="Cruzado L."/>
            <person name="Jimenez J."/>
            <person name="Sanchez M."/>
            <person name="del Rey F."/>
            <person name="Benito J."/>
            <person name="Dominguez A."/>
            <person name="Revuelta J.L."/>
            <person name="Moreno S."/>
            <person name="Armstrong J."/>
            <person name="Forsburg S.L."/>
            <person name="Cerutti L."/>
            <person name="Lowe T."/>
            <person name="McCombie W.R."/>
            <person name="Paulsen I."/>
            <person name="Potashkin J."/>
            <person name="Shpakovski G.V."/>
            <person name="Ussery D."/>
            <person name="Barrell B.G."/>
            <person name="Nurse P."/>
        </authorList>
    </citation>
    <scope>NUCLEOTIDE SEQUENCE [LARGE SCALE GENOMIC DNA]</scope>
    <source>
        <strain>972 / ATCC 24843</strain>
    </source>
</reference>
<reference key="2">
    <citation type="journal article" date="2006" name="Nat. Biotechnol.">
        <title>ORFeome cloning and global analysis of protein localization in the fission yeast Schizosaccharomyces pombe.</title>
        <authorList>
            <person name="Matsuyama A."/>
            <person name="Arai R."/>
            <person name="Yashiroda Y."/>
            <person name="Shirai A."/>
            <person name="Kamata A."/>
            <person name="Sekido S."/>
            <person name="Kobayashi Y."/>
            <person name="Hashimoto A."/>
            <person name="Hamamoto M."/>
            <person name="Hiraoka Y."/>
            <person name="Horinouchi S."/>
            <person name="Yoshida M."/>
        </authorList>
    </citation>
    <scope>SUBCELLULAR LOCATION [LARGE SCALE ANALYSIS]</scope>
</reference>
<reference key="3">
    <citation type="journal article" date="2008" name="J. Proteome Res.">
        <title>Phosphoproteome analysis of fission yeast.</title>
        <authorList>
            <person name="Wilson-Grady J.T."/>
            <person name="Villen J."/>
            <person name="Gygi S.P."/>
        </authorList>
    </citation>
    <scope>PHOSPHORYLATION [LARGE SCALE ANALYSIS] AT SER-123</scope>
    <scope>IDENTIFICATION BY MASS SPECTROMETRY</scope>
</reference>
<proteinExistence type="evidence at protein level"/>
<dbReference type="EMBL" id="CU329671">
    <property type="protein sequence ID" value="CAB37608.1"/>
    <property type="molecule type" value="Genomic_DNA"/>
</dbReference>
<dbReference type="PIR" id="T40611">
    <property type="entry name" value="T40611"/>
</dbReference>
<dbReference type="SMR" id="O94670"/>
<dbReference type="BioGRID" id="277660">
    <property type="interactions" value="16"/>
</dbReference>
<dbReference type="STRING" id="284812.O94670"/>
<dbReference type="iPTMnet" id="O94670"/>
<dbReference type="PaxDb" id="4896-SPBC651.12c.1"/>
<dbReference type="EnsemblFungi" id="SPBC651.12c.1">
    <property type="protein sequence ID" value="SPBC651.12c.1:pep"/>
    <property type="gene ID" value="SPBC651.12c"/>
</dbReference>
<dbReference type="KEGG" id="spo:2541145"/>
<dbReference type="PomBase" id="SPBC651.12c"/>
<dbReference type="VEuPathDB" id="FungiDB:SPBC651.12c"/>
<dbReference type="HOGENOM" id="CLU_1054330_0_0_1"/>
<dbReference type="InParanoid" id="O94670"/>
<dbReference type="OMA" id="RKNYLLC"/>
<dbReference type="PRO" id="PR:O94670"/>
<dbReference type="Proteomes" id="UP000002485">
    <property type="component" value="Chromosome II"/>
</dbReference>
<dbReference type="GO" id="GO:0005737">
    <property type="term" value="C:cytoplasm"/>
    <property type="evidence" value="ECO:0007005"/>
    <property type="project" value="PomBase"/>
</dbReference>
<dbReference type="GO" id="GO:0072686">
    <property type="term" value="C:mitotic spindle"/>
    <property type="evidence" value="ECO:0007005"/>
    <property type="project" value="PomBase"/>
</dbReference>
<dbReference type="GO" id="GO:0005634">
    <property type="term" value="C:nucleus"/>
    <property type="evidence" value="ECO:0007005"/>
    <property type="project" value="PomBase"/>
</dbReference>
<dbReference type="GO" id="GO:0035861">
    <property type="term" value="C:site of double-strand break"/>
    <property type="evidence" value="ECO:0000314"/>
    <property type="project" value="PomBase"/>
</dbReference>
<dbReference type="InterPro" id="IPR046808">
    <property type="entry name" value="Dbl7"/>
</dbReference>
<dbReference type="Pfam" id="PF20496">
    <property type="entry name" value="Dbl7"/>
    <property type="match status" value="1"/>
</dbReference>
<sequence length="273" mass="30451">MSSKKVKYNPRKSASQNEATSASAGSKAFGFNSAKKEKLHRMALSMEAIEDVEDQSFNGKSSNLVRKRRGLDEDIDEFSSSSEDERKPARHPQSSSQKPFASSTYNVELPTSPTKITNIGQSSPRALRYLSPESQRIKNAKMKSPISTHLAKYSIHHMGTPPSKPSFLSSSVSSPASSKQKSLFQCTKDLEKRYINRVHRSSETELVQLSSIKVLDRFLSDIYLVEAEKNEEKCTVLLLKRSNTDVDNSSSLSLTLPLCKFTKNGHQVHIHPC</sequence>
<keyword id="KW-0963">Cytoplasm</keyword>
<keyword id="KW-0206">Cytoskeleton</keyword>
<keyword id="KW-0539">Nucleus</keyword>
<keyword id="KW-0597">Phosphoprotein</keyword>
<keyword id="KW-1185">Reference proteome</keyword>
<protein>
    <recommendedName>
        <fullName>Uncharacterized protein C651.12c</fullName>
    </recommendedName>
</protein>
<comment type="subcellular location">
    <subcellularLocation>
        <location evidence="2">Nucleus</location>
    </subcellularLocation>
    <subcellularLocation>
        <location evidence="2">Cytoplasm</location>
        <location evidence="2">Cytoskeleton</location>
        <location evidence="2">Spindle</location>
    </subcellularLocation>
</comment>
<accession>O94670</accession>
<evidence type="ECO:0000256" key="1">
    <source>
        <dbReference type="SAM" id="MobiDB-lite"/>
    </source>
</evidence>
<evidence type="ECO:0000269" key="2">
    <source>
    </source>
</evidence>
<evidence type="ECO:0000269" key="3">
    <source>
    </source>
</evidence>
<name>YBWC_SCHPO</name>